<sequence length="156" mass="17737">MGSLRGLRLVAGSCFRSCERDAFSSLRLTRNSDLKRTNGFCSKPQESPKPPDQHTYSHRVPLHKPTDWEKKILIWSGRFKKEDEIPETVSFEMLDAAKNKVRVKISYVMIALTVAGCVLMVIEGKKAARRNETLTSLNLEKKARLREEAAMKAKTE</sequence>
<feature type="chain" id="PRO_0000254634" description="Protein FAM162A">
    <location>
        <begin position="1"/>
        <end position="156"/>
    </location>
</feature>
<feature type="transmembrane region" description="Helical" evidence="3">
    <location>
        <begin position="105"/>
        <end position="122"/>
    </location>
</feature>
<feature type="region of interest" description="Disordered" evidence="4">
    <location>
        <begin position="37"/>
        <end position="57"/>
    </location>
</feature>
<feature type="region of interest" description="Required for proapoptotic activity" evidence="2">
    <location>
        <begin position="78"/>
        <end position="104"/>
    </location>
</feature>
<organism>
    <name type="scientific">Bos taurus</name>
    <name type="common">Bovine</name>
    <dbReference type="NCBI Taxonomy" id="9913"/>
    <lineage>
        <taxon>Eukaryota</taxon>
        <taxon>Metazoa</taxon>
        <taxon>Chordata</taxon>
        <taxon>Craniata</taxon>
        <taxon>Vertebrata</taxon>
        <taxon>Euteleostomi</taxon>
        <taxon>Mammalia</taxon>
        <taxon>Eutheria</taxon>
        <taxon>Laurasiatheria</taxon>
        <taxon>Artiodactyla</taxon>
        <taxon>Ruminantia</taxon>
        <taxon>Pecora</taxon>
        <taxon>Bovidae</taxon>
        <taxon>Bovinae</taxon>
        <taxon>Bos</taxon>
    </lineage>
</organism>
<gene>
    <name type="primary">FAM162A</name>
    <name type="synonym">E2IG5</name>
</gene>
<name>F162A_BOVIN</name>
<keyword id="KW-0053">Apoptosis</keyword>
<keyword id="KW-0472">Membrane</keyword>
<keyword id="KW-0496">Mitochondrion</keyword>
<keyword id="KW-1185">Reference proteome</keyword>
<keyword id="KW-0812">Transmembrane</keyword>
<keyword id="KW-1133">Transmembrane helix</keyword>
<evidence type="ECO:0000250" key="1">
    <source>
        <dbReference type="UniProtKB" id="Q96A26"/>
    </source>
</evidence>
<evidence type="ECO:0000250" key="2">
    <source>
        <dbReference type="UniProtKB" id="Q9D6U8"/>
    </source>
</evidence>
<evidence type="ECO:0000255" key="3"/>
<evidence type="ECO:0000256" key="4">
    <source>
        <dbReference type="SAM" id="MobiDB-lite"/>
    </source>
</evidence>
<evidence type="ECO:0000305" key="5"/>
<comment type="function">
    <text evidence="2">Proposed to be involved in regulation of apoptosis; the exact mechanism may differ between cell types/tissues. May be involved in hypoxia-induced cell death of transformed cells implicating cytochrome C release and caspase activation (such as CASP9) and inducing mitochondrial permeability transition. May be involved in hypoxia-induced cell death of neuronal cells probably by promoting release of AIFM1 from mitochondria to cytoplasm and its translocation to the nucleus; however, the involvement of caspases has been reported conflictingly.</text>
</comment>
<comment type="subunit">
    <text evidence="1">Interacts with HSP90AB1; HSP90AB1 is essential for FAM162A mitochondrial localization and pro-apoptotic activity. Interacts with VDAC2; the interaction is probably involved in inducing mitochondrial permeability transition.</text>
</comment>
<comment type="subcellular location">
    <subcellularLocation>
        <location evidence="1">Mitochondrion membrane</location>
        <topology evidence="5">Single-pass membrane protein</topology>
    </subcellularLocation>
</comment>
<comment type="similarity">
    <text evidence="5">Belongs to the UPF0389 family.</text>
</comment>
<reference key="1">
    <citation type="submission" date="2006-01" db="EMBL/GenBank/DDBJ databases">
        <authorList>
            <consortium name="NIH - Mammalian Gene Collection (MGC) project"/>
        </authorList>
    </citation>
    <scope>NUCLEOTIDE SEQUENCE [LARGE SCALE MRNA]</scope>
    <source>
        <strain>Hereford</strain>
        <tissue>Heart ventricle</tissue>
    </source>
</reference>
<protein>
    <recommendedName>
        <fullName>Protein FAM162A</fullName>
    </recommendedName>
    <alternativeName>
        <fullName>E2-induced gene 5 protein homolog</fullName>
    </alternativeName>
</protein>
<dbReference type="EMBL" id="BC111680">
    <property type="protein sequence ID" value="AAI11681.1"/>
    <property type="molecule type" value="mRNA"/>
</dbReference>
<dbReference type="RefSeq" id="NP_001040057.1">
    <property type="nucleotide sequence ID" value="NM_001046592.1"/>
</dbReference>
<dbReference type="SMR" id="Q2NKR7"/>
<dbReference type="FunCoup" id="Q2NKR7">
    <property type="interactions" value="1338"/>
</dbReference>
<dbReference type="STRING" id="9913.ENSBTAP00000014796"/>
<dbReference type="PaxDb" id="9913-ENSBTAP00000014796"/>
<dbReference type="Ensembl" id="ENSBTAT00000014796.6">
    <property type="protein sequence ID" value="ENSBTAP00000014796.6"/>
    <property type="gene ID" value="ENSBTAG00000011140.7"/>
</dbReference>
<dbReference type="GeneID" id="617104"/>
<dbReference type="KEGG" id="bta:617104"/>
<dbReference type="CTD" id="26355"/>
<dbReference type="VEuPathDB" id="HostDB:ENSBTAG00000011140"/>
<dbReference type="VGNC" id="VGNC:28744">
    <property type="gene designation" value="FAM162A"/>
</dbReference>
<dbReference type="eggNOG" id="ENOG502S1PN">
    <property type="taxonomic scope" value="Eukaryota"/>
</dbReference>
<dbReference type="GeneTree" id="ENSGT00640000091497"/>
<dbReference type="HOGENOM" id="CLU_122911_0_0_1"/>
<dbReference type="InParanoid" id="Q2NKR7"/>
<dbReference type="OMA" id="GMCNKLP"/>
<dbReference type="OrthoDB" id="8193498at2759"/>
<dbReference type="Proteomes" id="UP000009136">
    <property type="component" value="Chromosome 1"/>
</dbReference>
<dbReference type="Bgee" id="ENSBTAG00000011140">
    <property type="expression patterns" value="Expressed in rumen papilla and 104 other cell types or tissues"/>
</dbReference>
<dbReference type="GO" id="GO:0031966">
    <property type="term" value="C:mitochondrial membrane"/>
    <property type="evidence" value="ECO:0007669"/>
    <property type="project" value="UniProtKB-SubCell"/>
</dbReference>
<dbReference type="GO" id="GO:0005739">
    <property type="term" value="C:mitochondrion"/>
    <property type="evidence" value="ECO:0000318"/>
    <property type="project" value="GO_Central"/>
</dbReference>
<dbReference type="GO" id="GO:0071456">
    <property type="term" value="P:cellular response to hypoxia"/>
    <property type="evidence" value="ECO:0000250"/>
    <property type="project" value="UniProtKB"/>
</dbReference>
<dbReference type="GO" id="GO:0051402">
    <property type="term" value="P:neuron apoptotic process"/>
    <property type="evidence" value="ECO:0000318"/>
    <property type="project" value="GO_Central"/>
</dbReference>
<dbReference type="GO" id="GO:0043065">
    <property type="term" value="P:positive regulation of apoptotic process"/>
    <property type="evidence" value="ECO:0000250"/>
    <property type="project" value="UniProtKB"/>
</dbReference>
<dbReference type="GO" id="GO:0090200">
    <property type="term" value="P:positive regulation of release of cytochrome c from mitochondria"/>
    <property type="evidence" value="ECO:0000250"/>
    <property type="project" value="UniProtKB"/>
</dbReference>
<dbReference type="InterPro" id="IPR009432">
    <property type="entry name" value="DUF1075"/>
</dbReference>
<dbReference type="PANTHER" id="PTHR13674">
    <property type="entry name" value="GROWTH AND TRANSFORMATION-DEPENDENT PROTEIN"/>
    <property type="match status" value="1"/>
</dbReference>
<dbReference type="PANTHER" id="PTHR13674:SF2">
    <property type="entry name" value="PROTEIN FAM162A"/>
    <property type="match status" value="1"/>
</dbReference>
<dbReference type="Pfam" id="PF06388">
    <property type="entry name" value="DUF1075"/>
    <property type="match status" value="1"/>
</dbReference>
<accession>Q2NKR7</accession>
<proteinExistence type="evidence at transcript level"/>